<sequence length="156" mass="17325">MTGKRELRVKPIVNGTVIDHITSGQSLNVLKILGINAASRYVVSVLMNVPSGEMKGKDVVKIENRELDPEELDSIALIAPRATINIIRNYEVVGKHRVDPPREVSGLVRCGNPNCISNTNEPVTSRFTVERTGDDIQLRCSYCEYVIDQEIADHLL</sequence>
<dbReference type="EMBL" id="AM114193">
    <property type="protein sequence ID" value="CAJ36360.1"/>
    <property type="molecule type" value="Genomic_DNA"/>
</dbReference>
<dbReference type="RefSeq" id="WP_012036163.1">
    <property type="nucleotide sequence ID" value="NC_009464.1"/>
</dbReference>
<dbReference type="SMR" id="Q0W5I3"/>
<dbReference type="STRING" id="351160.RCIX1028"/>
<dbReference type="GeneID" id="5143703"/>
<dbReference type="KEGG" id="rci:RCIX1028"/>
<dbReference type="PATRIC" id="fig|351160.9.peg.1881"/>
<dbReference type="eggNOG" id="arCOG04229">
    <property type="taxonomic scope" value="Archaea"/>
</dbReference>
<dbReference type="OrthoDB" id="7000at2157"/>
<dbReference type="Proteomes" id="UP000000663">
    <property type="component" value="Chromosome"/>
</dbReference>
<dbReference type="GO" id="GO:0009347">
    <property type="term" value="C:aspartate carbamoyltransferase complex"/>
    <property type="evidence" value="ECO:0007669"/>
    <property type="project" value="InterPro"/>
</dbReference>
<dbReference type="GO" id="GO:0046872">
    <property type="term" value="F:metal ion binding"/>
    <property type="evidence" value="ECO:0007669"/>
    <property type="project" value="UniProtKB-KW"/>
</dbReference>
<dbReference type="GO" id="GO:0006207">
    <property type="term" value="P:'de novo' pyrimidine nucleobase biosynthetic process"/>
    <property type="evidence" value="ECO:0007669"/>
    <property type="project" value="InterPro"/>
</dbReference>
<dbReference type="GO" id="GO:0006221">
    <property type="term" value="P:pyrimidine nucleotide biosynthetic process"/>
    <property type="evidence" value="ECO:0007669"/>
    <property type="project" value="UniProtKB-UniRule"/>
</dbReference>
<dbReference type="Gene3D" id="2.30.30.20">
    <property type="entry name" value="Aspartate carbamoyltransferase regulatory subunit, C-terminal domain"/>
    <property type="match status" value="1"/>
</dbReference>
<dbReference type="Gene3D" id="3.30.70.140">
    <property type="entry name" value="Aspartate carbamoyltransferase regulatory subunit, N-terminal domain"/>
    <property type="match status" value="1"/>
</dbReference>
<dbReference type="HAMAP" id="MF_00002">
    <property type="entry name" value="Asp_carb_tr_reg"/>
    <property type="match status" value="1"/>
</dbReference>
<dbReference type="InterPro" id="IPR020545">
    <property type="entry name" value="Asp_carbamoyltransf_reg_N"/>
</dbReference>
<dbReference type="InterPro" id="IPR002801">
    <property type="entry name" value="Asp_carbamoylTrfase_reg"/>
</dbReference>
<dbReference type="InterPro" id="IPR020542">
    <property type="entry name" value="Asp_carbamoyltrfase_reg_C"/>
</dbReference>
<dbReference type="InterPro" id="IPR036792">
    <property type="entry name" value="Asp_carbatrfase_reg_C_sf"/>
</dbReference>
<dbReference type="InterPro" id="IPR036793">
    <property type="entry name" value="Asp_carbatrfase_reg_N_sf"/>
</dbReference>
<dbReference type="NCBIfam" id="TIGR00240">
    <property type="entry name" value="ATCase_reg"/>
    <property type="match status" value="1"/>
</dbReference>
<dbReference type="PANTHER" id="PTHR35805">
    <property type="entry name" value="ASPARTATE CARBAMOYLTRANSFERASE REGULATORY CHAIN"/>
    <property type="match status" value="1"/>
</dbReference>
<dbReference type="PANTHER" id="PTHR35805:SF1">
    <property type="entry name" value="ASPARTATE CARBAMOYLTRANSFERASE REGULATORY CHAIN"/>
    <property type="match status" value="1"/>
</dbReference>
<dbReference type="Pfam" id="PF01948">
    <property type="entry name" value="PyrI"/>
    <property type="match status" value="1"/>
</dbReference>
<dbReference type="Pfam" id="PF02748">
    <property type="entry name" value="PyrI_C"/>
    <property type="match status" value="1"/>
</dbReference>
<dbReference type="SUPFAM" id="SSF57825">
    <property type="entry name" value="Aspartate carbamoyltransferase, Regulatory-chain, C-terminal domain"/>
    <property type="match status" value="1"/>
</dbReference>
<dbReference type="SUPFAM" id="SSF54893">
    <property type="entry name" value="Aspartate carbamoyltransferase, Regulatory-chain, N-terminal domain"/>
    <property type="match status" value="1"/>
</dbReference>
<organism>
    <name type="scientific">Methanocella arvoryzae (strain DSM 22066 / NBRC 105507 / MRE50)</name>
    <dbReference type="NCBI Taxonomy" id="351160"/>
    <lineage>
        <taxon>Archaea</taxon>
        <taxon>Methanobacteriati</taxon>
        <taxon>Methanobacteriota</taxon>
        <taxon>Stenosarchaea group</taxon>
        <taxon>Methanomicrobia</taxon>
        <taxon>Methanocellales</taxon>
        <taxon>Methanocellaceae</taxon>
        <taxon>Methanocella</taxon>
    </lineage>
</organism>
<evidence type="ECO:0000255" key="1">
    <source>
        <dbReference type="HAMAP-Rule" id="MF_00002"/>
    </source>
</evidence>
<accession>Q0W5I3</accession>
<comment type="function">
    <text evidence="1">Involved in allosteric regulation of aspartate carbamoyltransferase.</text>
</comment>
<comment type="cofactor">
    <cofactor evidence="1">
        <name>Zn(2+)</name>
        <dbReference type="ChEBI" id="CHEBI:29105"/>
    </cofactor>
    <text evidence="1">Binds 1 zinc ion per subunit.</text>
</comment>
<comment type="subunit">
    <text evidence="1">Contains catalytic and regulatory chains.</text>
</comment>
<comment type="similarity">
    <text evidence="1">Belongs to the PyrI family.</text>
</comment>
<reference key="1">
    <citation type="journal article" date="2006" name="Science">
        <title>Genome of rice cluster I archaea -- the key methane producers in the rice rhizosphere.</title>
        <authorList>
            <person name="Erkel C."/>
            <person name="Kube M."/>
            <person name="Reinhardt R."/>
            <person name="Liesack W."/>
        </authorList>
    </citation>
    <scope>NUCLEOTIDE SEQUENCE [LARGE SCALE GENOMIC DNA]</scope>
    <source>
        <strain>DSM 22066 / NBRC 105507 / MRE50</strain>
    </source>
</reference>
<protein>
    <recommendedName>
        <fullName evidence="1">Aspartate carbamoyltransferase regulatory chain</fullName>
    </recommendedName>
</protein>
<gene>
    <name evidence="1" type="primary">pyrI</name>
    <name type="ordered locus">UNCMA_18380</name>
    <name type="ORF">RCIX1028</name>
</gene>
<name>PYRI_METAR</name>
<feature type="chain" id="PRO_1000000054" description="Aspartate carbamoyltransferase regulatory chain">
    <location>
        <begin position="1"/>
        <end position="156"/>
    </location>
</feature>
<feature type="binding site" evidence="1">
    <location>
        <position position="110"/>
    </location>
    <ligand>
        <name>Zn(2+)</name>
        <dbReference type="ChEBI" id="CHEBI:29105"/>
    </ligand>
</feature>
<feature type="binding site" evidence="1">
    <location>
        <position position="115"/>
    </location>
    <ligand>
        <name>Zn(2+)</name>
        <dbReference type="ChEBI" id="CHEBI:29105"/>
    </ligand>
</feature>
<feature type="binding site" evidence="1">
    <location>
        <position position="140"/>
    </location>
    <ligand>
        <name>Zn(2+)</name>
        <dbReference type="ChEBI" id="CHEBI:29105"/>
    </ligand>
</feature>
<feature type="binding site" evidence="1">
    <location>
        <position position="143"/>
    </location>
    <ligand>
        <name>Zn(2+)</name>
        <dbReference type="ChEBI" id="CHEBI:29105"/>
    </ligand>
</feature>
<keyword id="KW-0479">Metal-binding</keyword>
<keyword id="KW-0665">Pyrimidine biosynthesis</keyword>
<keyword id="KW-1185">Reference proteome</keyword>
<keyword id="KW-0862">Zinc</keyword>
<proteinExistence type="inferred from homology"/>